<reference key="1">
    <citation type="journal article" date="2001" name="Science">
        <title>Mechanisms of evolution in Rickettsia conorii and R. prowazekii.</title>
        <authorList>
            <person name="Ogata H."/>
            <person name="Audic S."/>
            <person name="Renesto-Audiffren P."/>
            <person name="Fournier P.-E."/>
            <person name="Barbe V."/>
            <person name="Samson D."/>
            <person name="Roux V."/>
            <person name="Cossart P."/>
            <person name="Weissenbach J."/>
            <person name="Claverie J.-M."/>
            <person name="Raoult D."/>
        </authorList>
    </citation>
    <scope>NUCLEOTIDE SEQUENCE [LARGE SCALE GENOMIC DNA]</scope>
    <source>
        <strain>ATCC VR-613 / Malish 7</strain>
    </source>
</reference>
<sequence length="205" mass="23460">MKIQSNVIKIIIVISLLIGVGALYLLLSLRTPEKPLAGQVNIYEDNVKIGGDFELIDQNGEIFNSDKLKGNLSLIYFGFTSCPDICPTSLNKMTEIVEILNKHKIDILPVFITIDPKRDTPIALKEYLKHFHPKFIGLTGNEQQIKDVTDKFKVFYARVHGDDDDPNYMLDHSSFTYLIDANGKYLKHFYLDSSPKEMMEFLRNE</sequence>
<accession>Q92H76</accession>
<keyword id="KW-0186">Copper</keyword>
<keyword id="KW-0479">Metal-binding</keyword>
<gene>
    <name type="ordered locus">RC0895</name>
</gene>
<name>SCO22_RICCN</name>
<evidence type="ECO:0000250" key="1"/>
<evidence type="ECO:0000305" key="2"/>
<feature type="chain" id="PRO_0000173879" description="SCO2-like protein RC0895">
    <location>
        <begin position="1"/>
        <end position="205"/>
    </location>
</feature>
<feature type="binding site" evidence="1">
    <location>
        <position position="82"/>
    </location>
    <ligand>
        <name>Cu cation</name>
        <dbReference type="ChEBI" id="CHEBI:23378"/>
    </ligand>
</feature>
<feature type="binding site" evidence="1">
    <location>
        <position position="86"/>
    </location>
    <ligand>
        <name>Cu cation</name>
        <dbReference type="ChEBI" id="CHEBI:23378"/>
    </ligand>
</feature>
<feature type="binding site" evidence="1">
    <location>
        <position position="172"/>
    </location>
    <ligand>
        <name>Cu cation</name>
        <dbReference type="ChEBI" id="CHEBI:23378"/>
    </ligand>
</feature>
<protein>
    <recommendedName>
        <fullName>SCO2-like protein RC0895</fullName>
    </recommendedName>
</protein>
<organism>
    <name type="scientific">Rickettsia conorii (strain ATCC VR-613 / Malish 7)</name>
    <dbReference type="NCBI Taxonomy" id="272944"/>
    <lineage>
        <taxon>Bacteria</taxon>
        <taxon>Pseudomonadati</taxon>
        <taxon>Pseudomonadota</taxon>
        <taxon>Alphaproteobacteria</taxon>
        <taxon>Rickettsiales</taxon>
        <taxon>Rickettsiaceae</taxon>
        <taxon>Rickettsieae</taxon>
        <taxon>Rickettsia</taxon>
        <taxon>spotted fever group</taxon>
    </lineage>
</organism>
<proteinExistence type="inferred from homology"/>
<dbReference type="EMBL" id="AE006914">
    <property type="protein sequence ID" value="AAL03433.1"/>
    <property type="molecule type" value="Genomic_DNA"/>
</dbReference>
<dbReference type="PIR" id="G97811">
    <property type="entry name" value="G97811"/>
</dbReference>
<dbReference type="RefSeq" id="WP_004998018.1">
    <property type="nucleotide sequence ID" value="NC_003103.1"/>
</dbReference>
<dbReference type="SMR" id="Q92H76"/>
<dbReference type="KEGG" id="rco:RC0895"/>
<dbReference type="HOGENOM" id="CLU_050131_3_1_5"/>
<dbReference type="Proteomes" id="UP000000816">
    <property type="component" value="Chromosome"/>
</dbReference>
<dbReference type="GO" id="GO:0046872">
    <property type="term" value="F:metal ion binding"/>
    <property type="evidence" value="ECO:0007669"/>
    <property type="project" value="UniProtKB-KW"/>
</dbReference>
<dbReference type="CDD" id="cd02968">
    <property type="entry name" value="SCO"/>
    <property type="match status" value="1"/>
</dbReference>
<dbReference type="FunFam" id="3.40.30.10:FF:000013">
    <property type="entry name" value="Blast:Protein SCO1 homolog, mitochondrial"/>
    <property type="match status" value="1"/>
</dbReference>
<dbReference type="Gene3D" id="3.40.30.10">
    <property type="entry name" value="Glutaredoxin"/>
    <property type="match status" value="1"/>
</dbReference>
<dbReference type="InterPro" id="IPR003782">
    <property type="entry name" value="SCO1/SenC"/>
</dbReference>
<dbReference type="InterPro" id="IPR036249">
    <property type="entry name" value="Thioredoxin-like_sf"/>
</dbReference>
<dbReference type="PANTHER" id="PTHR12151">
    <property type="entry name" value="ELECTRON TRANSPORT PROTIN SCO1/SENC FAMILY MEMBER"/>
    <property type="match status" value="1"/>
</dbReference>
<dbReference type="PANTHER" id="PTHR12151:SF25">
    <property type="entry name" value="LINALOOL DEHYDRATASE_ISOMERASE DOMAIN-CONTAINING PROTEIN"/>
    <property type="match status" value="1"/>
</dbReference>
<dbReference type="Pfam" id="PF02630">
    <property type="entry name" value="SCO1-SenC"/>
    <property type="match status" value="1"/>
</dbReference>
<dbReference type="SUPFAM" id="SSF52833">
    <property type="entry name" value="Thioredoxin-like"/>
    <property type="match status" value="1"/>
</dbReference>
<comment type="similarity">
    <text evidence="2">Belongs to the SCO1/2 family.</text>
</comment>